<comment type="function">
    <text evidence="1">Phosphorylation of dTMP to form dTDP in both de novo and salvage pathways of dTTP synthesis.</text>
</comment>
<comment type="catalytic activity">
    <reaction evidence="1">
        <text>dTMP + ATP = dTDP + ADP</text>
        <dbReference type="Rhea" id="RHEA:13517"/>
        <dbReference type="ChEBI" id="CHEBI:30616"/>
        <dbReference type="ChEBI" id="CHEBI:58369"/>
        <dbReference type="ChEBI" id="CHEBI:63528"/>
        <dbReference type="ChEBI" id="CHEBI:456216"/>
        <dbReference type="EC" id="2.7.4.9"/>
    </reaction>
</comment>
<comment type="similarity">
    <text evidence="1">Belongs to the thymidylate kinase family.</text>
</comment>
<protein>
    <recommendedName>
        <fullName evidence="1">Thymidylate kinase</fullName>
        <ecNumber evidence="1">2.7.4.9</ecNumber>
    </recommendedName>
    <alternativeName>
        <fullName evidence="1">dTMP kinase</fullName>
    </alternativeName>
</protein>
<accession>A9INL0</accession>
<organism>
    <name type="scientific">Bordetella petrii (strain ATCC BAA-461 / DSM 12804 / CCUG 43448)</name>
    <dbReference type="NCBI Taxonomy" id="340100"/>
    <lineage>
        <taxon>Bacteria</taxon>
        <taxon>Pseudomonadati</taxon>
        <taxon>Pseudomonadota</taxon>
        <taxon>Betaproteobacteria</taxon>
        <taxon>Burkholderiales</taxon>
        <taxon>Alcaligenaceae</taxon>
        <taxon>Bordetella</taxon>
    </lineage>
</organism>
<feature type="chain" id="PRO_1000097377" description="Thymidylate kinase">
    <location>
        <begin position="1"/>
        <end position="207"/>
    </location>
</feature>
<feature type="binding site" evidence="1">
    <location>
        <begin position="12"/>
        <end position="19"/>
    </location>
    <ligand>
        <name>ATP</name>
        <dbReference type="ChEBI" id="CHEBI:30616"/>
    </ligand>
</feature>
<proteinExistence type="inferred from homology"/>
<keyword id="KW-0067">ATP-binding</keyword>
<keyword id="KW-0418">Kinase</keyword>
<keyword id="KW-0545">Nucleotide biosynthesis</keyword>
<keyword id="KW-0547">Nucleotide-binding</keyword>
<keyword id="KW-0808">Transferase</keyword>
<name>KTHY_BORPD</name>
<dbReference type="EC" id="2.7.4.9" evidence="1"/>
<dbReference type="EMBL" id="AM902716">
    <property type="protein sequence ID" value="CAP42846.1"/>
    <property type="molecule type" value="Genomic_DNA"/>
</dbReference>
<dbReference type="SMR" id="A9INL0"/>
<dbReference type="STRING" id="94624.Bpet2504"/>
<dbReference type="KEGG" id="bpt:Bpet2504"/>
<dbReference type="eggNOG" id="COG0125">
    <property type="taxonomic scope" value="Bacteria"/>
</dbReference>
<dbReference type="Proteomes" id="UP000001225">
    <property type="component" value="Chromosome"/>
</dbReference>
<dbReference type="GO" id="GO:0005829">
    <property type="term" value="C:cytosol"/>
    <property type="evidence" value="ECO:0007669"/>
    <property type="project" value="TreeGrafter"/>
</dbReference>
<dbReference type="GO" id="GO:0005524">
    <property type="term" value="F:ATP binding"/>
    <property type="evidence" value="ECO:0007669"/>
    <property type="project" value="UniProtKB-UniRule"/>
</dbReference>
<dbReference type="GO" id="GO:0004798">
    <property type="term" value="F:dTMP kinase activity"/>
    <property type="evidence" value="ECO:0007669"/>
    <property type="project" value="UniProtKB-UniRule"/>
</dbReference>
<dbReference type="GO" id="GO:0006233">
    <property type="term" value="P:dTDP biosynthetic process"/>
    <property type="evidence" value="ECO:0007669"/>
    <property type="project" value="InterPro"/>
</dbReference>
<dbReference type="GO" id="GO:0006235">
    <property type="term" value="P:dTTP biosynthetic process"/>
    <property type="evidence" value="ECO:0007669"/>
    <property type="project" value="UniProtKB-UniRule"/>
</dbReference>
<dbReference type="GO" id="GO:0006227">
    <property type="term" value="P:dUDP biosynthetic process"/>
    <property type="evidence" value="ECO:0007669"/>
    <property type="project" value="TreeGrafter"/>
</dbReference>
<dbReference type="CDD" id="cd01672">
    <property type="entry name" value="TMPK"/>
    <property type="match status" value="1"/>
</dbReference>
<dbReference type="FunFam" id="3.40.50.300:FF:000225">
    <property type="entry name" value="Thymidylate kinase"/>
    <property type="match status" value="1"/>
</dbReference>
<dbReference type="Gene3D" id="3.40.50.300">
    <property type="entry name" value="P-loop containing nucleotide triphosphate hydrolases"/>
    <property type="match status" value="1"/>
</dbReference>
<dbReference type="HAMAP" id="MF_00165">
    <property type="entry name" value="Thymidylate_kinase"/>
    <property type="match status" value="1"/>
</dbReference>
<dbReference type="InterPro" id="IPR027417">
    <property type="entry name" value="P-loop_NTPase"/>
</dbReference>
<dbReference type="InterPro" id="IPR039430">
    <property type="entry name" value="Thymidylate_kin-like_dom"/>
</dbReference>
<dbReference type="InterPro" id="IPR018094">
    <property type="entry name" value="Thymidylate_kinase"/>
</dbReference>
<dbReference type="NCBIfam" id="TIGR00041">
    <property type="entry name" value="DTMP_kinase"/>
    <property type="match status" value="1"/>
</dbReference>
<dbReference type="PANTHER" id="PTHR10344">
    <property type="entry name" value="THYMIDYLATE KINASE"/>
    <property type="match status" value="1"/>
</dbReference>
<dbReference type="PANTHER" id="PTHR10344:SF4">
    <property type="entry name" value="UMP-CMP KINASE 2, MITOCHONDRIAL"/>
    <property type="match status" value="1"/>
</dbReference>
<dbReference type="Pfam" id="PF02223">
    <property type="entry name" value="Thymidylate_kin"/>
    <property type="match status" value="1"/>
</dbReference>
<dbReference type="SUPFAM" id="SSF52540">
    <property type="entry name" value="P-loop containing nucleoside triphosphate hydrolases"/>
    <property type="match status" value="1"/>
</dbReference>
<evidence type="ECO:0000255" key="1">
    <source>
        <dbReference type="HAMAP-Rule" id="MF_00165"/>
    </source>
</evidence>
<reference key="1">
    <citation type="journal article" date="2008" name="BMC Genomics">
        <title>The missing link: Bordetella petrii is endowed with both the metabolic versatility of environmental bacteria and virulence traits of pathogenic Bordetellae.</title>
        <authorList>
            <person name="Gross R."/>
            <person name="Guzman C.A."/>
            <person name="Sebaihia M."/>
            <person name="Martin dos Santos V.A.P."/>
            <person name="Pieper D.H."/>
            <person name="Koebnik R."/>
            <person name="Lechner M."/>
            <person name="Bartels D."/>
            <person name="Buhrmester J."/>
            <person name="Choudhuri J.V."/>
            <person name="Ebensen T."/>
            <person name="Gaigalat L."/>
            <person name="Herrmann S."/>
            <person name="Khachane A.N."/>
            <person name="Larisch C."/>
            <person name="Link S."/>
            <person name="Linke B."/>
            <person name="Meyer F."/>
            <person name="Mormann S."/>
            <person name="Nakunst D."/>
            <person name="Rueckert C."/>
            <person name="Schneiker-Bekel S."/>
            <person name="Schulze K."/>
            <person name="Voerholter F.-J."/>
            <person name="Yevsa T."/>
            <person name="Engle J.T."/>
            <person name="Goldman W.E."/>
            <person name="Puehler A."/>
            <person name="Goebel U.B."/>
            <person name="Goesmann A."/>
            <person name="Bloecker H."/>
            <person name="Kaiser O."/>
            <person name="Martinez-Arias R."/>
        </authorList>
    </citation>
    <scope>NUCLEOTIDE SEQUENCE [LARGE SCALE GENOMIC DNA]</scope>
    <source>
        <strain>ATCC BAA-461 / DSM 12804 / CCUG 43448</strain>
    </source>
</reference>
<sequence>MTARGRFITLEGVDGAGKSTHAAWLADALRDMGRTVVATREPGGTPLGETLRGLVLSESMTLDTETLLMFAARCEHLTQVIEPALARGDWVVCDRYTDATYAYQGGGRQLGADRIAVLEQWMRPALQPDRTWLFDVPLELARARLADARLPDRFEREEAAFFERTRAAYLARAQAHPGRIRIVDSSRPVTEVRAQLHAELQALAEMP</sequence>
<gene>
    <name evidence="1" type="primary">tmk</name>
    <name type="ordered locus">Bpet2504</name>
</gene>